<reference key="1">
    <citation type="journal article" date="2000" name="Nature">
        <title>Genome sequence of the endocellular bacterial symbiont of aphids Buchnera sp. APS.</title>
        <authorList>
            <person name="Shigenobu S."/>
            <person name="Watanabe H."/>
            <person name="Hattori M."/>
            <person name="Sakaki Y."/>
            <person name="Ishikawa H."/>
        </authorList>
    </citation>
    <scope>NUCLEOTIDE SEQUENCE [LARGE SCALE GENOMIC DNA]</scope>
    <source>
        <strain>APS</strain>
    </source>
</reference>
<organism>
    <name type="scientific">Buchnera aphidicola subsp. Acyrthosiphon pisum (strain APS)</name>
    <name type="common">Acyrthosiphon pisum symbiotic bacterium</name>
    <dbReference type="NCBI Taxonomy" id="107806"/>
    <lineage>
        <taxon>Bacteria</taxon>
        <taxon>Pseudomonadati</taxon>
        <taxon>Pseudomonadota</taxon>
        <taxon>Gammaproteobacteria</taxon>
        <taxon>Enterobacterales</taxon>
        <taxon>Erwiniaceae</taxon>
        <taxon>Buchnera</taxon>
    </lineage>
</organism>
<dbReference type="EC" id="2.7.7.18"/>
<dbReference type="EMBL" id="BA000003">
    <property type="protein sequence ID" value="BAB13144.1"/>
    <property type="molecule type" value="Genomic_DNA"/>
</dbReference>
<dbReference type="RefSeq" id="NP_240258.1">
    <property type="nucleotide sequence ID" value="NC_002528.1"/>
</dbReference>
<dbReference type="RefSeq" id="WP_009874400.1">
    <property type="nucleotide sequence ID" value="NC_002528.1"/>
</dbReference>
<dbReference type="SMR" id="P57521"/>
<dbReference type="STRING" id="563178.BUAP5A_439"/>
<dbReference type="EnsemblBacteria" id="BAB13144">
    <property type="protein sequence ID" value="BAB13144"/>
    <property type="gene ID" value="BAB13144"/>
</dbReference>
<dbReference type="KEGG" id="buc:BU446"/>
<dbReference type="PATRIC" id="fig|107806.10.peg.456"/>
<dbReference type="eggNOG" id="COG1057">
    <property type="taxonomic scope" value="Bacteria"/>
</dbReference>
<dbReference type="HOGENOM" id="CLU_069765_0_0_6"/>
<dbReference type="UniPathway" id="UPA00253">
    <property type="reaction ID" value="UER00332"/>
</dbReference>
<dbReference type="Proteomes" id="UP000001806">
    <property type="component" value="Chromosome"/>
</dbReference>
<dbReference type="GO" id="GO:0005524">
    <property type="term" value="F:ATP binding"/>
    <property type="evidence" value="ECO:0007669"/>
    <property type="project" value="UniProtKB-KW"/>
</dbReference>
<dbReference type="GO" id="GO:0004515">
    <property type="term" value="F:nicotinate-nucleotide adenylyltransferase activity"/>
    <property type="evidence" value="ECO:0007669"/>
    <property type="project" value="UniProtKB-UniRule"/>
</dbReference>
<dbReference type="GO" id="GO:0009435">
    <property type="term" value="P:NAD biosynthetic process"/>
    <property type="evidence" value="ECO:0007669"/>
    <property type="project" value="UniProtKB-UniRule"/>
</dbReference>
<dbReference type="CDD" id="cd02165">
    <property type="entry name" value="NMNAT"/>
    <property type="match status" value="1"/>
</dbReference>
<dbReference type="Gene3D" id="3.40.50.620">
    <property type="entry name" value="HUPs"/>
    <property type="match status" value="1"/>
</dbReference>
<dbReference type="HAMAP" id="MF_00244">
    <property type="entry name" value="NaMN_adenylyltr"/>
    <property type="match status" value="1"/>
</dbReference>
<dbReference type="InterPro" id="IPR004821">
    <property type="entry name" value="Cyt_trans-like"/>
</dbReference>
<dbReference type="InterPro" id="IPR005248">
    <property type="entry name" value="NadD/NMNAT"/>
</dbReference>
<dbReference type="InterPro" id="IPR014729">
    <property type="entry name" value="Rossmann-like_a/b/a_fold"/>
</dbReference>
<dbReference type="NCBIfam" id="TIGR00125">
    <property type="entry name" value="cyt_tran_rel"/>
    <property type="match status" value="1"/>
</dbReference>
<dbReference type="NCBIfam" id="TIGR00482">
    <property type="entry name" value="nicotinate (nicotinamide) nucleotide adenylyltransferase"/>
    <property type="match status" value="1"/>
</dbReference>
<dbReference type="NCBIfam" id="NF000839">
    <property type="entry name" value="PRK00071.1-1"/>
    <property type="match status" value="1"/>
</dbReference>
<dbReference type="PANTHER" id="PTHR39321">
    <property type="entry name" value="NICOTINATE-NUCLEOTIDE ADENYLYLTRANSFERASE-RELATED"/>
    <property type="match status" value="1"/>
</dbReference>
<dbReference type="PANTHER" id="PTHR39321:SF3">
    <property type="entry name" value="PHOSPHOPANTETHEINE ADENYLYLTRANSFERASE"/>
    <property type="match status" value="1"/>
</dbReference>
<dbReference type="Pfam" id="PF01467">
    <property type="entry name" value="CTP_transf_like"/>
    <property type="match status" value="1"/>
</dbReference>
<dbReference type="SUPFAM" id="SSF52374">
    <property type="entry name" value="Nucleotidylyl transferase"/>
    <property type="match status" value="1"/>
</dbReference>
<feature type="chain" id="PRO_0000181398" description="Probable nicotinate-nucleotide adenylyltransferase">
    <location>
        <begin position="1"/>
        <end position="214"/>
    </location>
</feature>
<proteinExistence type="inferred from homology"/>
<gene>
    <name type="primary">nadD</name>
    <name type="ordered locus">BU446</name>
</gene>
<protein>
    <recommendedName>
        <fullName>Probable nicotinate-nucleotide adenylyltransferase</fullName>
        <ecNumber>2.7.7.18</ecNumber>
    </recommendedName>
    <alternativeName>
        <fullName>Deamido-NAD(+) diphosphorylase</fullName>
    </alternativeName>
    <alternativeName>
        <fullName>Deamido-NAD(+) pyrophosphorylase</fullName>
    </alternativeName>
    <alternativeName>
        <fullName>Nicotinate mononucleotide adenylyltransferase</fullName>
        <shortName>NaMN adenylyltransferase</shortName>
    </alternativeName>
</protein>
<evidence type="ECO:0000250" key="1"/>
<evidence type="ECO:0000305" key="2"/>
<sequence>MKKLCAIFGGNFDPIHYGHINLAEKLAKDISIKKIILLPNNYPPHRNKTQTSISDKIKMIKLAIHNNPLFEISYLETKKNNIFYTIDTLKKIRKKISHLEPLCFIIGEDNLQTFYLWKNWREILLYSHLLIYPRKHKKQKNDELEKWIHSNTVYDCNLLHKQPCGLIFFSHAPCINISSSRIRKNYFYGKNSHSLLPSIVNNYILLKKLYYTNQ</sequence>
<keyword id="KW-0067">ATP-binding</keyword>
<keyword id="KW-0520">NAD</keyword>
<keyword id="KW-0547">Nucleotide-binding</keyword>
<keyword id="KW-0548">Nucleotidyltransferase</keyword>
<keyword id="KW-0662">Pyridine nucleotide biosynthesis</keyword>
<keyword id="KW-1185">Reference proteome</keyword>
<keyword id="KW-0808">Transferase</keyword>
<comment type="function">
    <text evidence="1">Catalyzes the reversible adenylation of nicotinate mononucleotide (NaMN) to nicotinic acid adenine dinucleotide (NaAD).</text>
</comment>
<comment type="catalytic activity">
    <reaction>
        <text>nicotinate beta-D-ribonucleotide + ATP + H(+) = deamido-NAD(+) + diphosphate</text>
        <dbReference type="Rhea" id="RHEA:22860"/>
        <dbReference type="ChEBI" id="CHEBI:15378"/>
        <dbReference type="ChEBI" id="CHEBI:30616"/>
        <dbReference type="ChEBI" id="CHEBI:33019"/>
        <dbReference type="ChEBI" id="CHEBI:57502"/>
        <dbReference type="ChEBI" id="CHEBI:58437"/>
        <dbReference type="EC" id="2.7.7.18"/>
    </reaction>
</comment>
<comment type="pathway">
    <text>Cofactor biosynthesis; NAD(+) biosynthesis; deamido-NAD(+) from nicotinate D-ribonucleotide: step 1/1.</text>
</comment>
<comment type="similarity">
    <text evidence="2">Belongs to the NadD family.</text>
</comment>
<name>NADD_BUCAI</name>
<accession>P57521</accession>